<sequence length="248" mass="26086">MWLCPLALTLTLMAASGAACEVKDICVGSPGIPGTPGSHGLPGRDGRDGVKGDPGPPGPMGPPGDMPCFPGNDGLPGAPGIPGECGEKGEPGERGPPGLPAHLDEELQATLHDFRHQILQTRGALSLQESILAIGGKVFSTNGQSATFDAIQEACARAGGHIAVPRSPEENEAIASFVKKYNTYAYVGLTEGPSPGDFRYSDGTPVNYTNWYPGEPAGRGTEQCVEMYTDGRWNDRNCLYNRLTICEF</sequence>
<feature type="signal peptide" evidence="4">
    <location>
        <begin position="1"/>
        <end position="20"/>
    </location>
</feature>
<feature type="chain" id="PRO_0000046689" description="Pulmonary surfactant-associated protein A">
    <location>
        <begin position="21"/>
        <end position="248"/>
    </location>
</feature>
<feature type="domain" description="Collagen-like">
    <location>
        <begin position="31"/>
        <end position="100"/>
    </location>
</feature>
<feature type="domain" description="C-type lectin" evidence="5">
    <location>
        <begin position="134"/>
        <end position="247"/>
    </location>
</feature>
<feature type="region of interest" description="Disordered" evidence="6">
    <location>
        <begin position="33"/>
        <end position="100"/>
    </location>
</feature>
<feature type="compositionally biased region" description="Basic and acidic residues" evidence="6">
    <location>
        <begin position="42"/>
        <end position="51"/>
    </location>
</feature>
<feature type="compositionally biased region" description="Pro residues" evidence="6">
    <location>
        <begin position="54"/>
        <end position="65"/>
    </location>
</feature>
<feature type="binding site" evidence="1">
    <location>
        <position position="215"/>
    </location>
    <ligand>
        <name>Ca(2+)</name>
        <dbReference type="ChEBI" id="CHEBI:29108"/>
    </ligand>
</feature>
<feature type="binding site" evidence="1">
    <location>
        <position position="217"/>
    </location>
    <ligand>
        <name>Ca(2+)</name>
        <dbReference type="ChEBI" id="CHEBI:29108"/>
    </ligand>
</feature>
<feature type="binding site" evidence="1">
    <location>
        <position position="234"/>
    </location>
    <ligand>
        <name>Ca(2+)</name>
        <dbReference type="ChEBI" id="CHEBI:29108"/>
    </ligand>
</feature>
<feature type="binding site" evidence="1">
    <location>
        <position position="235"/>
    </location>
    <ligand>
        <name>Ca(2+)</name>
        <dbReference type="ChEBI" id="CHEBI:29108"/>
    </ligand>
</feature>
<feature type="glycosylation site" description="N-linked (GlcNAc...) asparagine" evidence="4">
    <location>
        <position position="207"/>
    </location>
</feature>
<feature type="disulfide bond" description="Interchain" evidence="5">
    <location>
        <position position="26"/>
    </location>
</feature>
<feature type="disulfide bond" evidence="5">
    <location>
        <begin position="155"/>
        <end position="246"/>
    </location>
</feature>
<feature type="disulfide bond" evidence="5">
    <location>
        <begin position="224"/>
        <end position="238"/>
    </location>
</feature>
<feature type="sequence conflict" description="In Ref. 2; AAF02223." evidence="7" ref="2">
    <original>P</original>
    <variation>R</variation>
    <location>
        <position position="213"/>
    </location>
</feature>
<evidence type="ECO:0000250" key="1"/>
<evidence type="ECO:0000250" key="2">
    <source>
        <dbReference type="UniProtKB" id="P35242"/>
    </source>
</evidence>
<evidence type="ECO:0000250" key="3">
    <source>
        <dbReference type="UniProtKB" id="Q8IWL2"/>
    </source>
</evidence>
<evidence type="ECO:0000255" key="4"/>
<evidence type="ECO:0000255" key="5">
    <source>
        <dbReference type="PROSITE-ProRule" id="PRU00040"/>
    </source>
</evidence>
<evidence type="ECO:0000256" key="6">
    <source>
        <dbReference type="SAM" id="MobiDB-lite"/>
    </source>
</evidence>
<evidence type="ECO:0000305" key="7"/>
<keyword id="KW-0106">Calcium</keyword>
<keyword id="KW-0176">Collagen</keyword>
<keyword id="KW-1015">Disulfide bond</keyword>
<keyword id="KW-0272">Extracellular matrix</keyword>
<keyword id="KW-0305">Gaseous exchange</keyword>
<keyword id="KW-0325">Glycoprotein</keyword>
<keyword id="KW-0430">Lectin</keyword>
<keyword id="KW-0479">Metal-binding</keyword>
<keyword id="KW-1185">Reference proteome</keyword>
<keyword id="KW-0964">Secreted</keyword>
<keyword id="KW-0732">Signal</keyword>
<keyword id="KW-0767">Surface film</keyword>
<comment type="function">
    <text evidence="2">In presence of calcium ions, it binds to surfactant phospholipids and contributes to lower the surface tension at the air-liquid interface in the alveoli of the mammalian lung and is essential for normal respiration. Enhances the expression of MYO18A/SP-R210 on alveolar macrophages.</text>
</comment>
<comment type="subunit">
    <text evidence="3">Oligomeric complex of 6 set of homotrimers.</text>
</comment>
<comment type="subcellular location">
    <subcellularLocation>
        <location evidence="3">Secreted</location>
    </subcellularLocation>
    <subcellularLocation>
        <location evidence="3">Secreted</location>
        <location evidence="3">Extracellular space</location>
        <location evidence="3">Extracellular matrix</location>
    </subcellularLocation>
    <subcellularLocation>
        <location evidence="3">Secreted</location>
        <location evidence="3">Extracellular space</location>
        <location evidence="3">Surface film</location>
    </subcellularLocation>
</comment>
<comment type="similarity">
    <text evidence="7">Belongs to the SFTPA family.</text>
</comment>
<organism>
    <name type="scientific">Macaca mulatta</name>
    <name type="common">Rhesus macaque</name>
    <dbReference type="NCBI Taxonomy" id="9544"/>
    <lineage>
        <taxon>Eukaryota</taxon>
        <taxon>Metazoa</taxon>
        <taxon>Chordata</taxon>
        <taxon>Craniata</taxon>
        <taxon>Vertebrata</taxon>
        <taxon>Euteleostomi</taxon>
        <taxon>Mammalia</taxon>
        <taxon>Eutheria</taxon>
        <taxon>Euarchontoglires</taxon>
        <taxon>Primates</taxon>
        <taxon>Haplorrhini</taxon>
        <taxon>Catarrhini</taxon>
        <taxon>Cercopithecidae</taxon>
        <taxon>Cercopithecinae</taxon>
        <taxon>Macaca</taxon>
    </lineage>
</organism>
<gene>
    <name type="primary">SFTPA1</name>
    <name type="synonym">SFTPA</name>
</gene>
<accession>Q9TUC5</accession>
<accession>F6Y0S1</accession>
<proteinExistence type="evidence at transcript level"/>
<protein>
    <recommendedName>
        <fullName>Pulmonary surfactant-associated protein A</fullName>
        <shortName>PSAP</shortName>
        <shortName>PSP-A</shortName>
        <shortName>SP-A</shortName>
    </recommendedName>
</protein>
<reference key="1">
    <citation type="journal article" date="2007" name="Science">
        <title>Evolutionary and biomedical insights from the rhesus macaque genome.</title>
        <authorList>
            <person name="Gibbs R.A."/>
            <person name="Rogers J."/>
            <person name="Katze M.G."/>
            <person name="Bumgarner R."/>
            <person name="Weinstock G.M."/>
            <person name="Mardis E.R."/>
            <person name="Remington K.A."/>
            <person name="Strausberg R.L."/>
            <person name="Venter J.C."/>
            <person name="Wilson R.K."/>
            <person name="Batzer M.A."/>
            <person name="Bustamante C.D."/>
            <person name="Eichler E.E."/>
            <person name="Hahn M.W."/>
            <person name="Hardison R.C."/>
            <person name="Makova K.D."/>
            <person name="Miller W."/>
            <person name="Milosavljevic A."/>
            <person name="Palermo R.E."/>
            <person name="Siepel A."/>
            <person name="Sikela J.M."/>
            <person name="Attaway T."/>
            <person name="Bell S."/>
            <person name="Bernard K.E."/>
            <person name="Buhay C.J."/>
            <person name="Chandrabose M.N."/>
            <person name="Dao M."/>
            <person name="Davis C."/>
            <person name="Delehaunty K.D."/>
            <person name="Ding Y."/>
            <person name="Dinh H.H."/>
            <person name="Dugan-Rocha S."/>
            <person name="Fulton L.A."/>
            <person name="Gabisi R.A."/>
            <person name="Garner T.T."/>
            <person name="Godfrey J."/>
            <person name="Hawes A.C."/>
            <person name="Hernandez J."/>
            <person name="Hines S."/>
            <person name="Holder M."/>
            <person name="Hume J."/>
            <person name="Jhangiani S.N."/>
            <person name="Joshi V."/>
            <person name="Khan Z.M."/>
            <person name="Kirkness E.F."/>
            <person name="Cree A."/>
            <person name="Fowler R.G."/>
            <person name="Lee S."/>
            <person name="Lewis L.R."/>
            <person name="Li Z."/>
            <person name="Liu Y.-S."/>
            <person name="Moore S.M."/>
            <person name="Muzny D."/>
            <person name="Nazareth L.V."/>
            <person name="Ngo D.N."/>
            <person name="Okwuonu G.O."/>
            <person name="Pai G."/>
            <person name="Parker D."/>
            <person name="Paul H.A."/>
            <person name="Pfannkoch C."/>
            <person name="Pohl C.S."/>
            <person name="Rogers Y.-H.C."/>
            <person name="Ruiz S.J."/>
            <person name="Sabo A."/>
            <person name="Santibanez J."/>
            <person name="Schneider B.W."/>
            <person name="Smith S.M."/>
            <person name="Sodergren E."/>
            <person name="Svatek A.F."/>
            <person name="Utterback T.R."/>
            <person name="Vattathil S."/>
            <person name="Warren W."/>
            <person name="White C.S."/>
            <person name="Chinwalla A.T."/>
            <person name="Feng Y."/>
            <person name="Halpern A.L."/>
            <person name="Hillier L.W."/>
            <person name="Huang X."/>
            <person name="Minx P."/>
            <person name="Nelson J.O."/>
            <person name="Pepin K.H."/>
            <person name="Qin X."/>
            <person name="Sutton G.G."/>
            <person name="Venter E."/>
            <person name="Walenz B.P."/>
            <person name="Wallis J.W."/>
            <person name="Worley K.C."/>
            <person name="Yang S.-P."/>
            <person name="Jones S.M."/>
            <person name="Marra M.A."/>
            <person name="Rocchi M."/>
            <person name="Schein J.E."/>
            <person name="Baertsch R."/>
            <person name="Clarke L."/>
            <person name="Csuros M."/>
            <person name="Glasscock J."/>
            <person name="Harris R.A."/>
            <person name="Havlak P."/>
            <person name="Jackson A.R."/>
            <person name="Jiang H."/>
            <person name="Liu Y."/>
            <person name="Messina D.N."/>
            <person name="Shen Y."/>
            <person name="Song H.X.-Z."/>
            <person name="Wylie T."/>
            <person name="Zhang L."/>
            <person name="Birney E."/>
            <person name="Han K."/>
            <person name="Konkel M.K."/>
            <person name="Lee J."/>
            <person name="Smit A.F.A."/>
            <person name="Ullmer B."/>
            <person name="Wang H."/>
            <person name="Xing J."/>
            <person name="Burhans R."/>
            <person name="Cheng Z."/>
            <person name="Karro J.E."/>
            <person name="Ma J."/>
            <person name="Raney B."/>
            <person name="She X."/>
            <person name="Cox M.J."/>
            <person name="Demuth J.P."/>
            <person name="Dumas L.J."/>
            <person name="Han S.-G."/>
            <person name="Hopkins J."/>
            <person name="Karimpour-Fard A."/>
            <person name="Kim Y.H."/>
            <person name="Pollack J.R."/>
            <person name="Vinar T."/>
            <person name="Addo-Quaye C."/>
            <person name="Degenhardt J."/>
            <person name="Denby A."/>
            <person name="Hubisz M.J."/>
            <person name="Indap A."/>
            <person name="Kosiol C."/>
            <person name="Lahn B.T."/>
            <person name="Lawson H.A."/>
            <person name="Marklein A."/>
            <person name="Nielsen R."/>
            <person name="Vallender E.J."/>
            <person name="Clark A.G."/>
            <person name="Ferguson B."/>
            <person name="Hernandez R.D."/>
            <person name="Hirani K."/>
            <person name="Kehrer-Sawatzki H."/>
            <person name="Kolb J."/>
            <person name="Patil S."/>
            <person name="Pu L.-L."/>
            <person name="Ren Y."/>
            <person name="Smith D.G."/>
            <person name="Wheeler D.A."/>
            <person name="Schenck I."/>
            <person name="Ball E.V."/>
            <person name="Chen R."/>
            <person name="Cooper D.N."/>
            <person name="Giardine B."/>
            <person name="Hsu F."/>
            <person name="Kent W.J."/>
            <person name="Lesk A."/>
            <person name="Nelson D.L."/>
            <person name="O'brien W.E."/>
            <person name="Pruefer K."/>
            <person name="Stenson P.D."/>
            <person name="Wallace J.C."/>
            <person name="Ke H."/>
            <person name="Liu X.-M."/>
            <person name="Wang P."/>
            <person name="Xiang A.P."/>
            <person name="Yang F."/>
            <person name="Barber G.P."/>
            <person name="Haussler D."/>
            <person name="Karolchik D."/>
            <person name="Kern A.D."/>
            <person name="Kuhn R.M."/>
            <person name="Smith K.E."/>
            <person name="Zwieg A.S."/>
        </authorList>
    </citation>
    <scope>NUCLEOTIDE SEQUENCE [LARGE SCALE GENOMIC DNA]</scope>
</reference>
<reference key="2">
    <citation type="journal article" date="1999" name="J. Clin. Invest.">
        <title>Prenatal nicotine increases pulmonary alpha7 nicotinic receptor expression and alters fetal lung development in monkeys.</title>
        <authorList>
            <person name="Sekhon H.S."/>
            <person name="Jia Y."/>
            <person name="Raab R."/>
            <person name="Kuryatov A."/>
            <person name="Pankow J.F."/>
            <person name="Whitsett J.A."/>
            <person name="Lindstrom J."/>
            <person name="Spindel E.R."/>
        </authorList>
    </citation>
    <scope>NUCLEOTIDE SEQUENCE [MRNA] OF 49-213</scope>
</reference>
<dbReference type="EMBL" id="AF087691">
    <property type="protein sequence ID" value="AAF02223.1"/>
    <property type="molecule type" value="mRNA"/>
</dbReference>
<dbReference type="RefSeq" id="NP_001182305.1">
    <property type="nucleotide sequence ID" value="NM_001195376.1"/>
</dbReference>
<dbReference type="RefSeq" id="XP_015002613.1">
    <property type="nucleotide sequence ID" value="XM_015147127.1"/>
</dbReference>
<dbReference type="RefSeq" id="XP_015002614.1">
    <property type="nucleotide sequence ID" value="XM_015147128.1"/>
</dbReference>
<dbReference type="SMR" id="Q9TUC5"/>
<dbReference type="FunCoup" id="Q9TUC5">
    <property type="interactions" value="222"/>
</dbReference>
<dbReference type="STRING" id="9544.ENSMMUP00000070689"/>
<dbReference type="GlyCosmos" id="Q9TUC5">
    <property type="glycosylation" value="1 site, No reported glycans"/>
</dbReference>
<dbReference type="PaxDb" id="9544-ENSMMUP00000012817"/>
<dbReference type="GeneID" id="574108"/>
<dbReference type="KEGG" id="mcc:574108"/>
<dbReference type="CTD" id="653509"/>
<dbReference type="eggNOG" id="KOG4297">
    <property type="taxonomic scope" value="Eukaryota"/>
</dbReference>
<dbReference type="HOGENOM" id="CLU_049894_3_0_1"/>
<dbReference type="InParanoid" id="Q9TUC5"/>
<dbReference type="OrthoDB" id="7357196at2759"/>
<dbReference type="TreeFam" id="TF330481"/>
<dbReference type="Proteomes" id="UP000006718">
    <property type="component" value="Unassembled WGS sequence"/>
</dbReference>
<dbReference type="GO" id="GO:0005581">
    <property type="term" value="C:collagen trimer"/>
    <property type="evidence" value="ECO:0007669"/>
    <property type="project" value="UniProtKB-KW"/>
</dbReference>
<dbReference type="GO" id="GO:0005615">
    <property type="term" value="C:extracellular space"/>
    <property type="evidence" value="ECO:0000318"/>
    <property type="project" value="GO_Central"/>
</dbReference>
<dbReference type="GO" id="GO:0005771">
    <property type="term" value="C:multivesicular body"/>
    <property type="evidence" value="ECO:0000318"/>
    <property type="project" value="GO_Central"/>
</dbReference>
<dbReference type="GO" id="GO:0030246">
    <property type="term" value="F:carbohydrate binding"/>
    <property type="evidence" value="ECO:0007669"/>
    <property type="project" value="UniProtKB-KW"/>
</dbReference>
<dbReference type="GO" id="GO:0046872">
    <property type="term" value="F:metal ion binding"/>
    <property type="evidence" value="ECO:0007669"/>
    <property type="project" value="UniProtKB-KW"/>
</dbReference>
<dbReference type="GO" id="GO:0007585">
    <property type="term" value="P:respiratory gaseous exchange by respiratory system"/>
    <property type="evidence" value="ECO:0007669"/>
    <property type="project" value="UniProtKB-KW"/>
</dbReference>
<dbReference type="CDD" id="cd03591">
    <property type="entry name" value="CLECT_collectin_like"/>
    <property type="match status" value="1"/>
</dbReference>
<dbReference type="FunFam" id="3.10.100.10:FF:000056">
    <property type="entry name" value="Pulmonary surfactant-associated protein A"/>
    <property type="match status" value="1"/>
</dbReference>
<dbReference type="Gene3D" id="3.10.100.10">
    <property type="entry name" value="Mannose-Binding Protein A, subunit A"/>
    <property type="match status" value="1"/>
</dbReference>
<dbReference type="InterPro" id="IPR001304">
    <property type="entry name" value="C-type_lectin-like"/>
</dbReference>
<dbReference type="InterPro" id="IPR016186">
    <property type="entry name" value="C-type_lectin-like/link_sf"/>
</dbReference>
<dbReference type="InterPro" id="IPR018378">
    <property type="entry name" value="C-type_lectin_CS"/>
</dbReference>
<dbReference type="InterPro" id="IPR051663">
    <property type="entry name" value="CLec_Tetranectin-domain"/>
</dbReference>
<dbReference type="InterPro" id="IPR033990">
    <property type="entry name" value="Collectin_CTLD"/>
</dbReference>
<dbReference type="InterPro" id="IPR016187">
    <property type="entry name" value="CTDL_fold"/>
</dbReference>
<dbReference type="PANTHER" id="PTHR22799:SF1">
    <property type="entry name" value="C-TYPE LECTIN DOMAIN FAMILY 11 MEMBER A"/>
    <property type="match status" value="1"/>
</dbReference>
<dbReference type="PANTHER" id="PTHR22799">
    <property type="entry name" value="TETRANECTIN-RELATED"/>
    <property type="match status" value="1"/>
</dbReference>
<dbReference type="Pfam" id="PF00059">
    <property type="entry name" value="Lectin_C"/>
    <property type="match status" value="1"/>
</dbReference>
<dbReference type="SMART" id="SM00034">
    <property type="entry name" value="CLECT"/>
    <property type="match status" value="1"/>
</dbReference>
<dbReference type="SUPFAM" id="SSF56436">
    <property type="entry name" value="C-type lectin-like"/>
    <property type="match status" value="1"/>
</dbReference>
<dbReference type="SUPFAM" id="SSF57944">
    <property type="entry name" value="Triple coiled coil domain of C-type lectins"/>
    <property type="match status" value="1"/>
</dbReference>
<dbReference type="PROSITE" id="PS00615">
    <property type="entry name" value="C_TYPE_LECTIN_1"/>
    <property type="match status" value="1"/>
</dbReference>
<dbReference type="PROSITE" id="PS50041">
    <property type="entry name" value="C_TYPE_LECTIN_2"/>
    <property type="match status" value="1"/>
</dbReference>
<name>SFTPA_MACMU</name>